<accession>Q57KZ6</accession>
<gene>
    <name type="primary">pipB2</name>
    <name type="ordered locus">SCH_2710</name>
</gene>
<reference key="1">
    <citation type="journal article" date="2005" name="Nucleic Acids Res.">
        <title>The genome sequence of Salmonella enterica serovar Choleraesuis, a highly invasive and resistant zoonotic pathogen.</title>
        <authorList>
            <person name="Chiu C.-H."/>
            <person name="Tang P."/>
            <person name="Chu C."/>
            <person name="Hu S."/>
            <person name="Bao Q."/>
            <person name="Yu J."/>
            <person name="Chou Y.-Y."/>
            <person name="Wang H.-S."/>
            <person name="Lee Y.-S."/>
        </authorList>
    </citation>
    <scope>NUCLEOTIDE SEQUENCE [LARGE SCALE GENOMIC DNA]</scope>
    <source>
        <strain>SC-B67</strain>
    </source>
</reference>
<keyword id="KW-1043">Host membrane</keyword>
<keyword id="KW-0472">Membrane</keyword>
<keyword id="KW-0677">Repeat</keyword>
<keyword id="KW-0964">Secreted</keyword>
<keyword id="KW-0843">Virulence</keyword>
<name>PIPB2_SALCH</name>
<organism>
    <name type="scientific">Salmonella choleraesuis (strain SC-B67)</name>
    <dbReference type="NCBI Taxonomy" id="321314"/>
    <lineage>
        <taxon>Bacteria</taxon>
        <taxon>Pseudomonadati</taxon>
        <taxon>Pseudomonadota</taxon>
        <taxon>Gammaproteobacteria</taxon>
        <taxon>Enterobacterales</taxon>
        <taxon>Enterobacteriaceae</taxon>
        <taxon>Salmonella</taxon>
    </lineage>
</organism>
<protein>
    <recommendedName>
        <fullName>Secreted effector protein PipB2</fullName>
    </recommendedName>
    <alternativeName>
        <fullName>Type III effector PipB2</fullName>
    </alternativeName>
</protein>
<feature type="chain" id="PRO_0000278296" description="Secreted effector protein PipB2">
    <location>
        <begin position="1"/>
        <end position="350"/>
    </location>
</feature>
<feature type="domain" description="Pentapeptide repeat 1">
    <location>
        <begin position="162"/>
        <end position="201"/>
    </location>
</feature>
<feature type="domain" description="Pentapeptide repeat 2">
    <location>
        <begin position="202"/>
        <end position="241"/>
    </location>
</feature>
<feature type="domain" description="Pentapeptide repeat 3">
    <location>
        <begin position="247"/>
        <end position="286"/>
    </location>
</feature>
<feature type="domain" description="Pentapeptide repeat 4">
    <location>
        <begin position="287"/>
        <end position="326"/>
    </location>
</feature>
<sequence>MQRSLDSLAGMATSAFGAGTSAAMRQATSPKTILEYIINFFTCGGIRRRNETQYQELIETMAETLKSTMPDRGAPLPENIILDDMDGCRVEFNLPGENNEAGQVIVRVSKGDHSETREIPLVSFEKICRALLFRCEFSLPQDSVILTAQGGMNLKGAVLTGANLTAENLCDADLSGANLEGAVLFMADCEGANFKGANLSGTSLGDSNFKNACLEDSIMCGATLDHANLTGANLQHASLLGCSMIECNCSGANMDHTNLSGATLIRADMSGATLQGATIMAAIMEDAVLTRANLRKASFISTNLDGADLAEANLNNTCFKDCTLTHLRTEDATMSTSTQTLFNEFYSENI</sequence>
<proteinExistence type="inferred from homology"/>
<evidence type="ECO:0000250" key="1"/>
<dbReference type="EMBL" id="AE017220">
    <property type="protein sequence ID" value="AAX66616.1"/>
    <property type="molecule type" value="Genomic_DNA"/>
</dbReference>
<dbReference type="RefSeq" id="WP_001540738.1">
    <property type="nucleotide sequence ID" value="NC_006905.1"/>
</dbReference>
<dbReference type="BMRB" id="Q57KZ6"/>
<dbReference type="SMR" id="Q57KZ6"/>
<dbReference type="KEGG" id="sec:SCH_2710"/>
<dbReference type="HOGENOM" id="CLU_067808_0_0_6"/>
<dbReference type="Proteomes" id="UP000000538">
    <property type="component" value="Chromosome"/>
</dbReference>
<dbReference type="GO" id="GO:0005576">
    <property type="term" value="C:extracellular region"/>
    <property type="evidence" value="ECO:0007669"/>
    <property type="project" value="UniProtKB-SubCell"/>
</dbReference>
<dbReference type="GO" id="GO:0033644">
    <property type="term" value="C:host cell membrane"/>
    <property type="evidence" value="ECO:0007669"/>
    <property type="project" value="UniProtKB-SubCell"/>
</dbReference>
<dbReference type="GO" id="GO:0016020">
    <property type="term" value="C:membrane"/>
    <property type="evidence" value="ECO:0007669"/>
    <property type="project" value="UniProtKB-KW"/>
</dbReference>
<dbReference type="Gene3D" id="2.160.20.80">
    <property type="entry name" value="E3 ubiquitin-protein ligase SopA"/>
    <property type="match status" value="1"/>
</dbReference>
<dbReference type="Gene3D" id="3.30.2450.10">
    <property type="entry name" value="Secreted effector protein pipB2"/>
    <property type="match status" value="1"/>
</dbReference>
<dbReference type="InterPro" id="IPR001646">
    <property type="entry name" value="5peptide_repeat"/>
</dbReference>
<dbReference type="InterPro" id="IPR051082">
    <property type="entry name" value="Pentapeptide-BTB/POZ_domain"/>
</dbReference>
<dbReference type="InterPro" id="IPR048984">
    <property type="entry name" value="PipB2_N"/>
</dbReference>
<dbReference type="NCBIfam" id="NF011743">
    <property type="entry name" value="PRK15196.1"/>
    <property type="match status" value="1"/>
</dbReference>
<dbReference type="PANTHER" id="PTHR14136">
    <property type="entry name" value="BTB_POZ DOMAIN-CONTAINING PROTEIN KCTD9"/>
    <property type="match status" value="1"/>
</dbReference>
<dbReference type="PANTHER" id="PTHR14136:SF17">
    <property type="entry name" value="BTB_POZ DOMAIN-CONTAINING PROTEIN KCTD9"/>
    <property type="match status" value="1"/>
</dbReference>
<dbReference type="Pfam" id="PF00805">
    <property type="entry name" value="Pentapeptide"/>
    <property type="match status" value="3"/>
</dbReference>
<dbReference type="Pfam" id="PF21684">
    <property type="entry name" value="PipB2_N"/>
    <property type="match status" value="1"/>
</dbReference>
<dbReference type="SUPFAM" id="SSF141571">
    <property type="entry name" value="Pentapeptide repeat-like"/>
    <property type="match status" value="1"/>
</dbReference>
<comment type="function">
    <text evidence="1">Effector proteins function to alter host cell physiology and promote bacterial survival in host tissues. Involved in the reorganization of late endosome/lysosome (LE/Lys) compartments in mammalian cells. Necessary and sufficient to link kinesin-1 onto the Salmonella-containing vacuole (SCV) membrane. Required for centrifugal extension of lysosomal glycoprotein-rich membrane tubules, known as Salmonella-induced filaments (Sifs), away from the SCV and toward the cell periphery. Required for virulence, but not for intracellular survival and replication in phagocytic cells (By similarity).</text>
</comment>
<comment type="subunit">
    <text evidence="1">Interacts with the host kinesin light chain (KLC), a subunit of the kinesin-1 motor complex.</text>
</comment>
<comment type="subcellular location">
    <subcellularLocation>
        <location evidence="1">Secreted</location>
    </subcellularLocation>
    <subcellularLocation>
        <location evidence="1">Host membrane</location>
    </subcellularLocation>
    <text evidence="1">Secreted via the type III secretion system 2 (SPI-2 T3SS), and delivered into the host cell.</text>
</comment>
<comment type="domain">
    <text evidence="1">Contains various tandem pentapeptide repeats in the C-terminal region. The pentapeptide motif is required to efficiently recruit kinesin-1. No position is completely conserved in these repeats, whose consensus sequence is A-[DN]-[FLM]-X-X. The C-terminal 38 amino acid residues, specifically, the C-terminal motif LFNEF, are required for peripheral localization of PipB2 and redistribution of lysosomal-associated membrane protein (LAMP). The N-terminal 225 amino acid residues are sufficient for type III translocation and association with Sifs and SCVs, but not accumulation in peripheral vesicles (By similarity).</text>
</comment>